<evidence type="ECO:0000255" key="1">
    <source>
        <dbReference type="HAMAP-Rule" id="MF_01554"/>
    </source>
</evidence>
<feature type="chain" id="PRO_0000305674" description="Phosphoglucosamine mutase">
    <location>
        <begin position="1"/>
        <end position="443"/>
    </location>
</feature>
<feature type="active site" description="Phosphoserine intermediate" evidence="1">
    <location>
        <position position="100"/>
    </location>
</feature>
<feature type="binding site" description="via phosphate group" evidence="1">
    <location>
        <position position="100"/>
    </location>
    <ligand>
        <name>Mg(2+)</name>
        <dbReference type="ChEBI" id="CHEBI:18420"/>
    </ligand>
</feature>
<feature type="binding site" evidence="1">
    <location>
        <position position="239"/>
    </location>
    <ligand>
        <name>Mg(2+)</name>
        <dbReference type="ChEBI" id="CHEBI:18420"/>
    </ligand>
</feature>
<feature type="binding site" evidence="1">
    <location>
        <position position="241"/>
    </location>
    <ligand>
        <name>Mg(2+)</name>
        <dbReference type="ChEBI" id="CHEBI:18420"/>
    </ligand>
</feature>
<feature type="binding site" evidence="1">
    <location>
        <position position="243"/>
    </location>
    <ligand>
        <name>Mg(2+)</name>
        <dbReference type="ChEBI" id="CHEBI:18420"/>
    </ligand>
</feature>
<feature type="modified residue" description="Phosphoserine" evidence="1">
    <location>
        <position position="100"/>
    </location>
</feature>
<reference key="1">
    <citation type="submission" date="2007-03" db="EMBL/GenBank/DDBJ databases">
        <title>Complete sequence of Shewanella loihica PV-4.</title>
        <authorList>
            <consortium name="US DOE Joint Genome Institute"/>
            <person name="Copeland A."/>
            <person name="Lucas S."/>
            <person name="Lapidus A."/>
            <person name="Barry K."/>
            <person name="Detter J.C."/>
            <person name="Glavina del Rio T."/>
            <person name="Hammon N."/>
            <person name="Israni S."/>
            <person name="Dalin E."/>
            <person name="Tice H."/>
            <person name="Pitluck S."/>
            <person name="Chain P."/>
            <person name="Malfatti S."/>
            <person name="Shin M."/>
            <person name="Vergez L."/>
            <person name="Schmutz J."/>
            <person name="Larimer F."/>
            <person name="Land M."/>
            <person name="Hauser L."/>
            <person name="Kyrpides N."/>
            <person name="Mikhailova N."/>
            <person name="Romine M.F."/>
            <person name="Serres G."/>
            <person name="Fredrickson J."/>
            <person name="Tiedje J."/>
            <person name="Richardson P."/>
        </authorList>
    </citation>
    <scope>NUCLEOTIDE SEQUENCE [LARGE SCALE GENOMIC DNA]</scope>
    <source>
        <strain>ATCC BAA-1088 / PV-4</strain>
    </source>
</reference>
<name>GLMM_SHELP</name>
<proteinExistence type="inferred from homology"/>
<dbReference type="EC" id="5.4.2.10" evidence="1"/>
<dbReference type="EMBL" id="CP000606">
    <property type="protein sequence ID" value="ABO24698.1"/>
    <property type="molecule type" value="Genomic_DNA"/>
</dbReference>
<dbReference type="RefSeq" id="WP_011866629.1">
    <property type="nucleotide sequence ID" value="NC_009092.1"/>
</dbReference>
<dbReference type="SMR" id="A3QGV0"/>
<dbReference type="STRING" id="323850.Shew_2832"/>
<dbReference type="KEGG" id="slo:Shew_2832"/>
<dbReference type="eggNOG" id="COG1109">
    <property type="taxonomic scope" value="Bacteria"/>
</dbReference>
<dbReference type="HOGENOM" id="CLU_016950_7_0_6"/>
<dbReference type="OrthoDB" id="9803322at2"/>
<dbReference type="Proteomes" id="UP000001558">
    <property type="component" value="Chromosome"/>
</dbReference>
<dbReference type="GO" id="GO:0005829">
    <property type="term" value="C:cytosol"/>
    <property type="evidence" value="ECO:0007669"/>
    <property type="project" value="TreeGrafter"/>
</dbReference>
<dbReference type="GO" id="GO:0000287">
    <property type="term" value="F:magnesium ion binding"/>
    <property type="evidence" value="ECO:0007669"/>
    <property type="project" value="UniProtKB-UniRule"/>
</dbReference>
<dbReference type="GO" id="GO:0008966">
    <property type="term" value="F:phosphoglucosamine mutase activity"/>
    <property type="evidence" value="ECO:0007669"/>
    <property type="project" value="UniProtKB-UniRule"/>
</dbReference>
<dbReference type="GO" id="GO:0004615">
    <property type="term" value="F:phosphomannomutase activity"/>
    <property type="evidence" value="ECO:0007669"/>
    <property type="project" value="TreeGrafter"/>
</dbReference>
<dbReference type="GO" id="GO:0005975">
    <property type="term" value="P:carbohydrate metabolic process"/>
    <property type="evidence" value="ECO:0007669"/>
    <property type="project" value="InterPro"/>
</dbReference>
<dbReference type="GO" id="GO:0009252">
    <property type="term" value="P:peptidoglycan biosynthetic process"/>
    <property type="evidence" value="ECO:0007669"/>
    <property type="project" value="TreeGrafter"/>
</dbReference>
<dbReference type="GO" id="GO:0006048">
    <property type="term" value="P:UDP-N-acetylglucosamine biosynthetic process"/>
    <property type="evidence" value="ECO:0007669"/>
    <property type="project" value="TreeGrafter"/>
</dbReference>
<dbReference type="CDD" id="cd05802">
    <property type="entry name" value="GlmM"/>
    <property type="match status" value="1"/>
</dbReference>
<dbReference type="FunFam" id="3.30.310.50:FF:000001">
    <property type="entry name" value="Phosphoglucosamine mutase"/>
    <property type="match status" value="1"/>
</dbReference>
<dbReference type="FunFam" id="3.40.120.10:FF:000001">
    <property type="entry name" value="Phosphoglucosamine mutase"/>
    <property type="match status" value="1"/>
</dbReference>
<dbReference type="FunFam" id="3.40.120.10:FF:000003">
    <property type="entry name" value="Phosphoglucosamine mutase"/>
    <property type="match status" value="1"/>
</dbReference>
<dbReference type="Gene3D" id="3.40.120.10">
    <property type="entry name" value="Alpha-D-Glucose-1,6-Bisphosphate, subunit A, domain 3"/>
    <property type="match status" value="3"/>
</dbReference>
<dbReference type="Gene3D" id="3.30.310.50">
    <property type="entry name" value="Alpha-D-phosphohexomutase, C-terminal domain"/>
    <property type="match status" value="1"/>
</dbReference>
<dbReference type="HAMAP" id="MF_01554_B">
    <property type="entry name" value="GlmM_B"/>
    <property type="match status" value="1"/>
</dbReference>
<dbReference type="InterPro" id="IPR005844">
    <property type="entry name" value="A-D-PHexomutase_a/b/a-I"/>
</dbReference>
<dbReference type="InterPro" id="IPR016055">
    <property type="entry name" value="A-D-PHexomutase_a/b/a-I/II/III"/>
</dbReference>
<dbReference type="InterPro" id="IPR005845">
    <property type="entry name" value="A-D-PHexomutase_a/b/a-II"/>
</dbReference>
<dbReference type="InterPro" id="IPR005846">
    <property type="entry name" value="A-D-PHexomutase_a/b/a-III"/>
</dbReference>
<dbReference type="InterPro" id="IPR005843">
    <property type="entry name" value="A-D-PHexomutase_C"/>
</dbReference>
<dbReference type="InterPro" id="IPR036900">
    <property type="entry name" value="A-D-PHexomutase_C_sf"/>
</dbReference>
<dbReference type="InterPro" id="IPR016066">
    <property type="entry name" value="A-D-PHexomutase_CS"/>
</dbReference>
<dbReference type="InterPro" id="IPR005841">
    <property type="entry name" value="Alpha-D-phosphohexomutase_SF"/>
</dbReference>
<dbReference type="InterPro" id="IPR006352">
    <property type="entry name" value="GlmM_bact"/>
</dbReference>
<dbReference type="InterPro" id="IPR050060">
    <property type="entry name" value="Phosphoglucosamine_mutase"/>
</dbReference>
<dbReference type="NCBIfam" id="TIGR01455">
    <property type="entry name" value="glmM"/>
    <property type="match status" value="1"/>
</dbReference>
<dbReference type="NCBIfam" id="NF008139">
    <property type="entry name" value="PRK10887.1"/>
    <property type="match status" value="1"/>
</dbReference>
<dbReference type="PANTHER" id="PTHR42946:SF1">
    <property type="entry name" value="PHOSPHOGLUCOMUTASE (ALPHA-D-GLUCOSE-1,6-BISPHOSPHATE-DEPENDENT)"/>
    <property type="match status" value="1"/>
</dbReference>
<dbReference type="PANTHER" id="PTHR42946">
    <property type="entry name" value="PHOSPHOHEXOSE MUTASE"/>
    <property type="match status" value="1"/>
</dbReference>
<dbReference type="Pfam" id="PF02878">
    <property type="entry name" value="PGM_PMM_I"/>
    <property type="match status" value="1"/>
</dbReference>
<dbReference type="Pfam" id="PF02879">
    <property type="entry name" value="PGM_PMM_II"/>
    <property type="match status" value="1"/>
</dbReference>
<dbReference type="Pfam" id="PF02880">
    <property type="entry name" value="PGM_PMM_III"/>
    <property type="match status" value="1"/>
</dbReference>
<dbReference type="Pfam" id="PF00408">
    <property type="entry name" value="PGM_PMM_IV"/>
    <property type="match status" value="1"/>
</dbReference>
<dbReference type="PRINTS" id="PR00509">
    <property type="entry name" value="PGMPMM"/>
</dbReference>
<dbReference type="SUPFAM" id="SSF55957">
    <property type="entry name" value="Phosphoglucomutase, C-terminal domain"/>
    <property type="match status" value="1"/>
</dbReference>
<dbReference type="SUPFAM" id="SSF53738">
    <property type="entry name" value="Phosphoglucomutase, first 3 domains"/>
    <property type="match status" value="3"/>
</dbReference>
<dbReference type="PROSITE" id="PS00710">
    <property type="entry name" value="PGM_PMM"/>
    <property type="match status" value="1"/>
</dbReference>
<sequence>MRKFFGTDGIRGKVGAGKMTPELALKLGWAAGRVLSRTGTKKVIIGKDTRISGYLFESAMEAGLSAAGLNVMLMGPMPTPAVAYLTRTFRAEAGVVISASHNPYYDNGIKFFSTDGSKLDDEVELEIERELEKPLECVESHLLGKVSRIEDAAGRYIEYCKGNFPAEHTLNGLKIVVDCAHGATYHIAPSVFRELGAEVITIGDKPDGININHEVGATSMGKIRETVIAEKADLGIALDGDGDRIMMVNRHGKVIDGDEILYILACDAQDRGVLKGGVVGTLMSNLGLDLALKARDIPFARSKVGDRYVMELLKEKDWRIGGENSGHILNLDHGTTGDGIVAGILVLAAMCRKQATLEELTEGIKMLPQVLVNVRFEGTHNPLEADSVLSAQAEVEAKLGERGRVLLRKSGTEPLIRVMVEGDVASDVKAHANYIAEAIKALV</sequence>
<protein>
    <recommendedName>
        <fullName evidence="1">Phosphoglucosamine mutase</fullName>
        <ecNumber evidence="1">5.4.2.10</ecNumber>
    </recommendedName>
</protein>
<comment type="function">
    <text evidence="1">Catalyzes the conversion of glucosamine-6-phosphate to glucosamine-1-phosphate.</text>
</comment>
<comment type="catalytic activity">
    <reaction evidence="1">
        <text>alpha-D-glucosamine 1-phosphate = D-glucosamine 6-phosphate</text>
        <dbReference type="Rhea" id="RHEA:23424"/>
        <dbReference type="ChEBI" id="CHEBI:58516"/>
        <dbReference type="ChEBI" id="CHEBI:58725"/>
        <dbReference type="EC" id="5.4.2.10"/>
    </reaction>
</comment>
<comment type="cofactor">
    <cofactor evidence="1">
        <name>Mg(2+)</name>
        <dbReference type="ChEBI" id="CHEBI:18420"/>
    </cofactor>
    <text evidence="1">Binds 1 Mg(2+) ion per subunit.</text>
</comment>
<comment type="PTM">
    <text evidence="1">Activated by phosphorylation.</text>
</comment>
<comment type="similarity">
    <text evidence="1">Belongs to the phosphohexose mutase family.</text>
</comment>
<keyword id="KW-0413">Isomerase</keyword>
<keyword id="KW-0460">Magnesium</keyword>
<keyword id="KW-0479">Metal-binding</keyword>
<keyword id="KW-0597">Phosphoprotein</keyword>
<keyword id="KW-1185">Reference proteome</keyword>
<accession>A3QGV0</accession>
<organism>
    <name type="scientific">Shewanella loihica (strain ATCC BAA-1088 / PV-4)</name>
    <dbReference type="NCBI Taxonomy" id="323850"/>
    <lineage>
        <taxon>Bacteria</taxon>
        <taxon>Pseudomonadati</taxon>
        <taxon>Pseudomonadota</taxon>
        <taxon>Gammaproteobacteria</taxon>
        <taxon>Alteromonadales</taxon>
        <taxon>Shewanellaceae</taxon>
        <taxon>Shewanella</taxon>
    </lineage>
</organism>
<gene>
    <name evidence="1" type="primary">glmM</name>
    <name type="ordered locus">Shew_2832</name>
</gene>